<sequence length="38" mass="4377">MSGINPNKQPVELNRTSLFWGLLLIFVLAVLFSSYFFN</sequence>
<gene>
    <name evidence="1" type="primary">psbL</name>
</gene>
<proteinExistence type="evidence at protein level"/>
<name>PSBL_CYACA</name>
<geneLocation type="chloroplast"/>
<organism>
    <name type="scientific">Cyanidium caldarium</name>
    <name type="common">Red alga</name>
    <dbReference type="NCBI Taxonomy" id="2771"/>
    <lineage>
        <taxon>Eukaryota</taxon>
        <taxon>Rhodophyta</taxon>
        <taxon>Bangiophyceae</taxon>
        <taxon>Cyanidiales</taxon>
        <taxon>Cyanidiaceae</taxon>
        <taxon>Cyanidium</taxon>
    </lineage>
</organism>
<accession>Q9TM22</accession>
<feature type="chain" id="PRO_0000219706" description="Photosystem II reaction center protein L">
    <location>
        <begin position="1"/>
        <end position="38"/>
    </location>
</feature>
<feature type="transmembrane region" description="Helical" evidence="1">
    <location>
        <begin position="17"/>
        <end position="37"/>
    </location>
</feature>
<protein>
    <recommendedName>
        <fullName evidence="1">Photosystem II reaction center protein L</fullName>
        <shortName evidence="1">PSII-L</shortName>
    </recommendedName>
</protein>
<evidence type="ECO:0000255" key="1">
    <source>
        <dbReference type="HAMAP-Rule" id="MF_01317"/>
    </source>
</evidence>
<evidence type="ECO:0000305" key="2"/>
<reference key="1">
    <citation type="journal article" date="2000" name="J. Mol. Evol.">
        <title>The structure and gene repertoire of an ancient red algal plastid genome.</title>
        <authorList>
            <person name="Gloeckner G."/>
            <person name="Rosenthal A."/>
            <person name="Valentin K.-U."/>
        </authorList>
    </citation>
    <scope>NUCLEOTIDE SEQUENCE [LARGE SCALE GENOMIC DNA]</scope>
    <source>
        <strain>RK-1</strain>
    </source>
</reference>
<comment type="function">
    <text evidence="1">One of the components of the core complex of photosystem II (PSII). PSII is a light-driven water:plastoquinone oxidoreductase that uses light energy to abstract electrons from H(2)O, generating O(2) and a proton gradient subsequently used for ATP formation. It consists of a core antenna complex that captures photons, and an electron transfer chain that converts photonic excitation into a charge separation. This subunit is found at the monomer-monomer interface and is required for correct PSII assembly and/or dimerization.</text>
</comment>
<comment type="subunit">
    <text evidence="2">PSII is composed of 1 copy each of membrane proteins PsbA, PsbB, PsbC, PsbD, PsbE, PsbF, PsbH, PsbI, PsbJ, PsbK, PsbL, PsbM, PsbT, PsbY, PsbZ, Psb30/Ycf12, at least 3 peripheral proteins of the oxygen-evolving complex and a large number of cofactors. It forms dimeric complexes.</text>
</comment>
<comment type="subcellular location">
    <subcellularLocation>
        <location evidence="1">Plastid</location>
        <location evidence="1">Chloroplast thylakoid membrane</location>
        <topology evidence="1">Single-pass membrane protein</topology>
    </subcellularLocation>
</comment>
<comment type="similarity">
    <text evidence="1">Belongs to the PsbL family.</text>
</comment>
<keyword id="KW-0002">3D-structure</keyword>
<keyword id="KW-0150">Chloroplast</keyword>
<keyword id="KW-0472">Membrane</keyword>
<keyword id="KW-0602">Photosynthesis</keyword>
<keyword id="KW-0604">Photosystem II</keyword>
<keyword id="KW-0934">Plastid</keyword>
<keyword id="KW-0674">Reaction center</keyword>
<keyword id="KW-0793">Thylakoid</keyword>
<keyword id="KW-0812">Transmembrane</keyword>
<keyword id="KW-1133">Transmembrane helix</keyword>
<dbReference type="EMBL" id="AF022186">
    <property type="protein sequence ID" value="AAF13001.1"/>
    <property type="molecule type" value="Genomic_DNA"/>
</dbReference>
<dbReference type="RefSeq" id="NP_045045.1">
    <property type="nucleotide sequence ID" value="NC_001840.1"/>
</dbReference>
<dbReference type="PDB" id="4YUU">
    <property type="method" value="X-ray"/>
    <property type="resolution" value="2.77 A"/>
    <property type="chains" value="L1/L2/l1/l2=1-38"/>
</dbReference>
<dbReference type="PDBsum" id="4YUU"/>
<dbReference type="SMR" id="Q9TM22"/>
<dbReference type="GeneID" id="800298"/>
<dbReference type="GO" id="GO:0009535">
    <property type="term" value="C:chloroplast thylakoid membrane"/>
    <property type="evidence" value="ECO:0007669"/>
    <property type="project" value="UniProtKB-SubCell"/>
</dbReference>
<dbReference type="GO" id="GO:0009539">
    <property type="term" value="C:photosystem II reaction center"/>
    <property type="evidence" value="ECO:0007669"/>
    <property type="project" value="InterPro"/>
</dbReference>
<dbReference type="GO" id="GO:0015979">
    <property type="term" value="P:photosynthesis"/>
    <property type="evidence" value="ECO:0007669"/>
    <property type="project" value="UniProtKB-UniRule"/>
</dbReference>
<dbReference type="HAMAP" id="MF_01317">
    <property type="entry name" value="PSII_PsbL"/>
    <property type="match status" value="1"/>
</dbReference>
<dbReference type="InterPro" id="IPR003372">
    <property type="entry name" value="PSII_PsbL"/>
</dbReference>
<dbReference type="InterPro" id="IPR037266">
    <property type="entry name" value="PSII_PsbL_sf"/>
</dbReference>
<dbReference type="NCBIfam" id="NF001972">
    <property type="entry name" value="PRK00753.1"/>
    <property type="match status" value="1"/>
</dbReference>
<dbReference type="Pfam" id="PF02419">
    <property type="entry name" value="PsbL"/>
    <property type="match status" value="1"/>
</dbReference>
<dbReference type="SUPFAM" id="SSF161017">
    <property type="entry name" value="Photosystem II reaction center protein L, PsbL"/>
    <property type="match status" value="1"/>
</dbReference>